<evidence type="ECO:0000255" key="1">
    <source>
        <dbReference type="HAMAP-Rule" id="MF_01367"/>
    </source>
</evidence>
<evidence type="ECO:0000305" key="2"/>
<protein>
    <recommendedName>
        <fullName evidence="1">Large ribosomal subunit protein uL14</fullName>
    </recommendedName>
    <alternativeName>
        <fullName evidence="2">50S ribosomal protein L14</fullName>
    </alternativeName>
</protein>
<gene>
    <name evidence="1" type="primary">rplN</name>
    <name type="ordered locus">lpg0339</name>
</gene>
<name>RL14_LEGPH</name>
<reference key="1">
    <citation type="journal article" date="2004" name="Science">
        <title>The genomic sequence of the accidental pathogen Legionella pneumophila.</title>
        <authorList>
            <person name="Chien M."/>
            <person name="Morozova I."/>
            <person name="Shi S."/>
            <person name="Sheng H."/>
            <person name="Chen J."/>
            <person name="Gomez S.M."/>
            <person name="Asamani G."/>
            <person name="Hill K."/>
            <person name="Nuara J."/>
            <person name="Feder M."/>
            <person name="Rineer J."/>
            <person name="Greenberg J.J."/>
            <person name="Steshenko V."/>
            <person name="Park S.H."/>
            <person name="Zhao B."/>
            <person name="Teplitskaya E."/>
            <person name="Edwards J.R."/>
            <person name="Pampou S."/>
            <person name="Georghiou A."/>
            <person name="Chou I.-C."/>
            <person name="Iannuccilli W."/>
            <person name="Ulz M.E."/>
            <person name="Kim D.H."/>
            <person name="Geringer-Sameth A."/>
            <person name="Goldsberry C."/>
            <person name="Morozov P."/>
            <person name="Fischer S.G."/>
            <person name="Segal G."/>
            <person name="Qu X."/>
            <person name="Rzhetsky A."/>
            <person name="Zhang P."/>
            <person name="Cayanis E."/>
            <person name="De Jong P.J."/>
            <person name="Ju J."/>
            <person name="Kalachikov S."/>
            <person name="Shuman H.A."/>
            <person name="Russo J.J."/>
        </authorList>
    </citation>
    <scope>NUCLEOTIDE SEQUENCE [LARGE SCALE GENOMIC DNA]</scope>
    <source>
        <strain>Philadelphia 1 / ATCC 33152 / DSM 7513</strain>
    </source>
</reference>
<proteinExistence type="inferred from homology"/>
<sequence>MIQMQTVLEVADNSGARKVMCIKVLGGSHRRYARVGDVIKVSVKDAIPRSKVKKGAVMRAVVVRTAQGVRRDDGSLIRFDDNAAVLLNNQNEPIGTRIFGPVTRELRERFMKIISLAAEVL</sequence>
<comment type="function">
    <text evidence="1">Binds to 23S rRNA. Forms part of two intersubunit bridges in the 70S ribosome.</text>
</comment>
<comment type="subunit">
    <text evidence="1">Part of the 50S ribosomal subunit. Forms a cluster with proteins L3 and L19. In the 70S ribosome, L14 and L19 interact and together make contacts with the 16S rRNA in bridges B5 and B8.</text>
</comment>
<comment type="similarity">
    <text evidence="1">Belongs to the universal ribosomal protein uL14 family.</text>
</comment>
<feature type="chain" id="PRO_1000055616" description="Large ribosomal subunit protein uL14">
    <location>
        <begin position="1"/>
        <end position="121"/>
    </location>
</feature>
<keyword id="KW-1185">Reference proteome</keyword>
<keyword id="KW-0687">Ribonucleoprotein</keyword>
<keyword id="KW-0689">Ribosomal protein</keyword>
<keyword id="KW-0694">RNA-binding</keyword>
<keyword id="KW-0699">rRNA-binding</keyword>
<organism>
    <name type="scientific">Legionella pneumophila subsp. pneumophila (strain Philadelphia 1 / ATCC 33152 / DSM 7513)</name>
    <dbReference type="NCBI Taxonomy" id="272624"/>
    <lineage>
        <taxon>Bacteria</taxon>
        <taxon>Pseudomonadati</taxon>
        <taxon>Pseudomonadota</taxon>
        <taxon>Gammaproteobacteria</taxon>
        <taxon>Legionellales</taxon>
        <taxon>Legionellaceae</taxon>
        <taxon>Legionella</taxon>
    </lineage>
</organism>
<accession>Q5ZYN3</accession>
<dbReference type="EMBL" id="AE017354">
    <property type="protein sequence ID" value="AAU26436.1"/>
    <property type="molecule type" value="Genomic_DNA"/>
</dbReference>
<dbReference type="RefSeq" id="WP_010946088.1">
    <property type="nucleotide sequence ID" value="NC_002942.5"/>
</dbReference>
<dbReference type="RefSeq" id="YP_094383.1">
    <property type="nucleotide sequence ID" value="NC_002942.5"/>
</dbReference>
<dbReference type="SMR" id="Q5ZYN3"/>
<dbReference type="STRING" id="272624.lpg0339"/>
<dbReference type="PaxDb" id="272624-lpg0339"/>
<dbReference type="GeneID" id="57034342"/>
<dbReference type="KEGG" id="lpn:lpg0339"/>
<dbReference type="PATRIC" id="fig|272624.6.peg.346"/>
<dbReference type="eggNOG" id="COG0093">
    <property type="taxonomic scope" value="Bacteria"/>
</dbReference>
<dbReference type="HOGENOM" id="CLU_095071_2_1_6"/>
<dbReference type="OrthoDB" id="9806379at2"/>
<dbReference type="Proteomes" id="UP000000609">
    <property type="component" value="Chromosome"/>
</dbReference>
<dbReference type="GO" id="GO:0022625">
    <property type="term" value="C:cytosolic large ribosomal subunit"/>
    <property type="evidence" value="ECO:0007669"/>
    <property type="project" value="TreeGrafter"/>
</dbReference>
<dbReference type="GO" id="GO:0070180">
    <property type="term" value="F:large ribosomal subunit rRNA binding"/>
    <property type="evidence" value="ECO:0007669"/>
    <property type="project" value="TreeGrafter"/>
</dbReference>
<dbReference type="GO" id="GO:0003735">
    <property type="term" value="F:structural constituent of ribosome"/>
    <property type="evidence" value="ECO:0007669"/>
    <property type="project" value="InterPro"/>
</dbReference>
<dbReference type="GO" id="GO:0006412">
    <property type="term" value="P:translation"/>
    <property type="evidence" value="ECO:0007669"/>
    <property type="project" value="UniProtKB-UniRule"/>
</dbReference>
<dbReference type="CDD" id="cd00337">
    <property type="entry name" value="Ribosomal_uL14"/>
    <property type="match status" value="1"/>
</dbReference>
<dbReference type="FunFam" id="2.40.150.20:FF:000001">
    <property type="entry name" value="50S ribosomal protein L14"/>
    <property type="match status" value="1"/>
</dbReference>
<dbReference type="Gene3D" id="2.40.150.20">
    <property type="entry name" value="Ribosomal protein L14"/>
    <property type="match status" value="1"/>
</dbReference>
<dbReference type="HAMAP" id="MF_01367">
    <property type="entry name" value="Ribosomal_uL14"/>
    <property type="match status" value="1"/>
</dbReference>
<dbReference type="InterPro" id="IPR000218">
    <property type="entry name" value="Ribosomal_uL14"/>
</dbReference>
<dbReference type="InterPro" id="IPR005745">
    <property type="entry name" value="Ribosomal_uL14_bac-type"/>
</dbReference>
<dbReference type="InterPro" id="IPR019972">
    <property type="entry name" value="Ribosomal_uL14_CS"/>
</dbReference>
<dbReference type="InterPro" id="IPR036853">
    <property type="entry name" value="Ribosomal_uL14_sf"/>
</dbReference>
<dbReference type="NCBIfam" id="TIGR01067">
    <property type="entry name" value="rplN_bact"/>
    <property type="match status" value="1"/>
</dbReference>
<dbReference type="PANTHER" id="PTHR11761">
    <property type="entry name" value="50S/60S RIBOSOMAL PROTEIN L14/L23"/>
    <property type="match status" value="1"/>
</dbReference>
<dbReference type="PANTHER" id="PTHR11761:SF3">
    <property type="entry name" value="LARGE RIBOSOMAL SUBUNIT PROTEIN UL14M"/>
    <property type="match status" value="1"/>
</dbReference>
<dbReference type="Pfam" id="PF00238">
    <property type="entry name" value="Ribosomal_L14"/>
    <property type="match status" value="1"/>
</dbReference>
<dbReference type="SMART" id="SM01374">
    <property type="entry name" value="Ribosomal_L14"/>
    <property type="match status" value="1"/>
</dbReference>
<dbReference type="SUPFAM" id="SSF50193">
    <property type="entry name" value="Ribosomal protein L14"/>
    <property type="match status" value="1"/>
</dbReference>
<dbReference type="PROSITE" id="PS00049">
    <property type="entry name" value="RIBOSOMAL_L14"/>
    <property type="match status" value="1"/>
</dbReference>